<accession>Q10YS8</accession>
<name>PSBL_TRIEI</name>
<sequence>MPLDRNNNPNQQPVELNRTSLYLGLLLVFVVGILFSSYFFN</sequence>
<feature type="chain" id="PRO_0000306218" description="Photosystem II reaction center protein L">
    <location>
        <begin position="1"/>
        <end position="41"/>
    </location>
</feature>
<feature type="transmembrane region" description="Helical" evidence="1">
    <location>
        <begin position="20"/>
        <end position="40"/>
    </location>
</feature>
<dbReference type="EMBL" id="CP000393">
    <property type="protein sequence ID" value="ABG52596.1"/>
    <property type="molecule type" value="Genomic_DNA"/>
</dbReference>
<dbReference type="RefSeq" id="WP_011612938.1">
    <property type="nucleotide sequence ID" value="NC_008312.1"/>
</dbReference>
<dbReference type="SMR" id="Q10YS8"/>
<dbReference type="STRING" id="203124.Tery_3506"/>
<dbReference type="KEGG" id="ter:Tery_3506"/>
<dbReference type="eggNOG" id="ENOG5033AKP">
    <property type="taxonomic scope" value="Bacteria"/>
</dbReference>
<dbReference type="HOGENOM" id="CLU_214425_0_0_3"/>
<dbReference type="GO" id="GO:0009539">
    <property type="term" value="C:photosystem II reaction center"/>
    <property type="evidence" value="ECO:0007669"/>
    <property type="project" value="InterPro"/>
</dbReference>
<dbReference type="GO" id="GO:0031676">
    <property type="term" value="C:plasma membrane-derived thylakoid membrane"/>
    <property type="evidence" value="ECO:0007669"/>
    <property type="project" value="UniProtKB-SubCell"/>
</dbReference>
<dbReference type="GO" id="GO:0015979">
    <property type="term" value="P:photosynthesis"/>
    <property type="evidence" value="ECO:0007669"/>
    <property type="project" value="UniProtKB-UniRule"/>
</dbReference>
<dbReference type="HAMAP" id="MF_01317">
    <property type="entry name" value="PSII_PsbL"/>
    <property type="match status" value="1"/>
</dbReference>
<dbReference type="InterPro" id="IPR003372">
    <property type="entry name" value="PSII_PsbL"/>
</dbReference>
<dbReference type="InterPro" id="IPR037266">
    <property type="entry name" value="PSII_PsbL_sf"/>
</dbReference>
<dbReference type="NCBIfam" id="NF001972">
    <property type="entry name" value="PRK00753.1"/>
    <property type="match status" value="1"/>
</dbReference>
<dbReference type="Pfam" id="PF02419">
    <property type="entry name" value="PsbL"/>
    <property type="match status" value="1"/>
</dbReference>
<dbReference type="SUPFAM" id="SSF161017">
    <property type="entry name" value="Photosystem II reaction center protein L, PsbL"/>
    <property type="match status" value="1"/>
</dbReference>
<keyword id="KW-0472">Membrane</keyword>
<keyword id="KW-0602">Photosynthesis</keyword>
<keyword id="KW-0604">Photosystem II</keyword>
<keyword id="KW-0674">Reaction center</keyword>
<keyword id="KW-0793">Thylakoid</keyword>
<keyword id="KW-0812">Transmembrane</keyword>
<keyword id="KW-1133">Transmembrane helix</keyword>
<proteinExistence type="inferred from homology"/>
<evidence type="ECO:0000255" key="1">
    <source>
        <dbReference type="HAMAP-Rule" id="MF_01317"/>
    </source>
</evidence>
<reference key="1">
    <citation type="journal article" date="2015" name="Proc. Natl. Acad. Sci. U.S.A.">
        <title>Trichodesmium genome maintains abundant, widespread noncoding DNA in situ, despite oligotrophic lifestyle.</title>
        <authorList>
            <person name="Walworth N."/>
            <person name="Pfreundt U."/>
            <person name="Nelson W.C."/>
            <person name="Mincer T."/>
            <person name="Heidelberg J.F."/>
            <person name="Fu F."/>
            <person name="Waterbury J.B."/>
            <person name="Glavina del Rio T."/>
            <person name="Goodwin L."/>
            <person name="Kyrpides N.C."/>
            <person name="Land M.L."/>
            <person name="Woyke T."/>
            <person name="Hutchins D.A."/>
            <person name="Hess W.R."/>
            <person name="Webb E.A."/>
        </authorList>
    </citation>
    <scope>NUCLEOTIDE SEQUENCE [LARGE SCALE GENOMIC DNA]</scope>
    <source>
        <strain>IMS101</strain>
    </source>
</reference>
<protein>
    <recommendedName>
        <fullName evidence="1">Photosystem II reaction center protein L</fullName>
        <shortName evidence="1">PSII-L</shortName>
    </recommendedName>
</protein>
<organism>
    <name type="scientific">Trichodesmium erythraeum (strain IMS101)</name>
    <dbReference type="NCBI Taxonomy" id="203124"/>
    <lineage>
        <taxon>Bacteria</taxon>
        <taxon>Bacillati</taxon>
        <taxon>Cyanobacteriota</taxon>
        <taxon>Cyanophyceae</taxon>
        <taxon>Oscillatoriophycideae</taxon>
        <taxon>Oscillatoriales</taxon>
        <taxon>Microcoleaceae</taxon>
        <taxon>Trichodesmium</taxon>
    </lineage>
</organism>
<gene>
    <name evidence="1" type="primary">psbL</name>
    <name type="ordered locus">Tery_3506</name>
</gene>
<comment type="function">
    <text evidence="1">One of the components of the core complex of photosystem II (PSII). PSII is a light-driven water:plastoquinone oxidoreductase that uses light energy to abstract electrons from H(2)O, generating O(2) and a proton gradient subsequently used for ATP formation. It consists of a core antenna complex that captures photons, and an electron transfer chain that converts photonic excitation into a charge separation. This subunit is found at the monomer-monomer interface and is required for correct PSII assembly and/or dimerization.</text>
</comment>
<comment type="subunit">
    <text evidence="1">PSII is composed of 1 copy each of membrane proteins PsbA, PsbB, PsbC, PsbD, PsbE, PsbF, PsbH, PsbI, PsbJ, PsbK, PsbL, PsbM, PsbT, PsbX, PsbY, PsbZ, Psb30/Ycf12, peripheral proteins PsbO, CyanoQ (PsbQ), PsbU, PsbV and a large number of cofactors. It forms dimeric complexes.</text>
</comment>
<comment type="subcellular location">
    <subcellularLocation>
        <location evidence="1">Cellular thylakoid membrane</location>
        <topology evidence="1">Single-pass membrane protein</topology>
    </subcellularLocation>
</comment>
<comment type="similarity">
    <text evidence="1">Belongs to the PsbL family.</text>
</comment>